<feature type="chain" id="PRO_1000189776" description="Phosphopentomutase">
    <location>
        <begin position="1"/>
        <end position="407"/>
    </location>
</feature>
<feature type="binding site" evidence="1">
    <location>
        <position position="10"/>
    </location>
    <ligand>
        <name>Mn(2+)</name>
        <dbReference type="ChEBI" id="CHEBI:29035"/>
        <label>1</label>
    </ligand>
</feature>
<feature type="binding site" evidence="1">
    <location>
        <position position="306"/>
    </location>
    <ligand>
        <name>Mn(2+)</name>
        <dbReference type="ChEBI" id="CHEBI:29035"/>
        <label>2</label>
    </ligand>
</feature>
<feature type="binding site" evidence="1">
    <location>
        <position position="311"/>
    </location>
    <ligand>
        <name>Mn(2+)</name>
        <dbReference type="ChEBI" id="CHEBI:29035"/>
        <label>2</label>
    </ligand>
</feature>
<feature type="binding site" evidence="1">
    <location>
        <position position="347"/>
    </location>
    <ligand>
        <name>Mn(2+)</name>
        <dbReference type="ChEBI" id="CHEBI:29035"/>
        <label>1</label>
    </ligand>
</feature>
<feature type="binding site" evidence="1">
    <location>
        <position position="348"/>
    </location>
    <ligand>
        <name>Mn(2+)</name>
        <dbReference type="ChEBI" id="CHEBI:29035"/>
        <label>1</label>
    </ligand>
</feature>
<feature type="binding site" evidence="1">
    <location>
        <position position="359"/>
    </location>
    <ligand>
        <name>Mn(2+)</name>
        <dbReference type="ChEBI" id="CHEBI:29035"/>
        <label>2</label>
    </ligand>
</feature>
<protein>
    <recommendedName>
        <fullName evidence="1">Phosphopentomutase</fullName>
        <ecNumber evidence="1">5.4.2.7</ecNumber>
    </recommendedName>
    <alternativeName>
        <fullName evidence="1">Phosphodeoxyribomutase</fullName>
    </alternativeName>
</protein>
<evidence type="ECO:0000255" key="1">
    <source>
        <dbReference type="HAMAP-Rule" id="MF_00740"/>
    </source>
</evidence>
<name>DEOB_YERPB</name>
<keyword id="KW-0963">Cytoplasm</keyword>
<keyword id="KW-0413">Isomerase</keyword>
<keyword id="KW-0464">Manganese</keyword>
<keyword id="KW-0479">Metal-binding</keyword>
<comment type="function">
    <text evidence="1">Isomerase that catalyzes the conversion of deoxy-ribose 1-phosphate (dRib-1-P) and ribose 1-phosphate (Rib-1-P) to deoxy-ribose 5-phosphate (dRib-5-P) and ribose 5-phosphate (Rib-5-P), respectively.</text>
</comment>
<comment type="catalytic activity">
    <reaction evidence="1">
        <text>2-deoxy-alpha-D-ribose 1-phosphate = 2-deoxy-D-ribose 5-phosphate</text>
        <dbReference type="Rhea" id="RHEA:27658"/>
        <dbReference type="ChEBI" id="CHEBI:57259"/>
        <dbReference type="ChEBI" id="CHEBI:62877"/>
        <dbReference type="EC" id="5.4.2.7"/>
    </reaction>
</comment>
<comment type="catalytic activity">
    <reaction evidence="1">
        <text>alpha-D-ribose 1-phosphate = D-ribose 5-phosphate</text>
        <dbReference type="Rhea" id="RHEA:18793"/>
        <dbReference type="ChEBI" id="CHEBI:57720"/>
        <dbReference type="ChEBI" id="CHEBI:78346"/>
        <dbReference type="EC" id="5.4.2.7"/>
    </reaction>
</comment>
<comment type="cofactor">
    <cofactor evidence="1">
        <name>Mn(2+)</name>
        <dbReference type="ChEBI" id="CHEBI:29035"/>
    </cofactor>
    <text evidence="1">Binds 2 manganese ions.</text>
</comment>
<comment type="pathway">
    <text evidence="1">Carbohydrate degradation; 2-deoxy-D-ribose 1-phosphate degradation; D-glyceraldehyde 3-phosphate and acetaldehyde from 2-deoxy-alpha-D-ribose 1-phosphate: step 1/2.</text>
</comment>
<comment type="subcellular location">
    <subcellularLocation>
        <location evidence="1">Cytoplasm</location>
    </subcellularLocation>
</comment>
<comment type="similarity">
    <text evidence="1">Belongs to the phosphopentomutase family.</text>
</comment>
<dbReference type="EC" id="5.4.2.7" evidence="1"/>
<dbReference type="EMBL" id="CP001048">
    <property type="protein sequence ID" value="ACC87589.1"/>
    <property type="molecule type" value="Genomic_DNA"/>
</dbReference>
<dbReference type="RefSeq" id="WP_011191688.1">
    <property type="nucleotide sequence ID" value="NZ_CP009780.1"/>
</dbReference>
<dbReference type="SMR" id="B2K3J0"/>
<dbReference type="GeneID" id="49787417"/>
<dbReference type="KEGG" id="ypb:YPTS_0605"/>
<dbReference type="PATRIC" id="fig|502801.10.peg.4283"/>
<dbReference type="UniPathway" id="UPA00002">
    <property type="reaction ID" value="UER00467"/>
</dbReference>
<dbReference type="GO" id="GO:0005829">
    <property type="term" value="C:cytosol"/>
    <property type="evidence" value="ECO:0007669"/>
    <property type="project" value="TreeGrafter"/>
</dbReference>
<dbReference type="GO" id="GO:0000287">
    <property type="term" value="F:magnesium ion binding"/>
    <property type="evidence" value="ECO:0007669"/>
    <property type="project" value="InterPro"/>
</dbReference>
<dbReference type="GO" id="GO:0030145">
    <property type="term" value="F:manganese ion binding"/>
    <property type="evidence" value="ECO:0007669"/>
    <property type="project" value="UniProtKB-UniRule"/>
</dbReference>
<dbReference type="GO" id="GO:0008973">
    <property type="term" value="F:phosphopentomutase activity"/>
    <property type="evidence" value="ECO:0007669"/>
    <property type="project" value="UniProtKB-UniRule"/>
</dbReference>
<dbReference type="GO" id="GO:0006018">
    <property type="term" value="P:2-deoxyribose 1-phosphate catabolic process"/>
    <property type="evidence" value="ECO:0007669"/>
    <property type="project" value="UniProtKB-UniRule"/>
</dbReference>
<dbReference type="GO" id="GO:0006015">
    <property type="term" value="P:5-phosphoribose 1-diphosphate biosynthetic process"/>
    <property type="evidence" value="ECO:0007669"/>
    <property type="project" value="UniProtKB-UniPathway"/>
</dbReference>
<dbReference type="GO" id="GO:0043094">
    <property type="term" value="P:metabolic compound salvage"/>
    <property type="evidence" value="ECO:0007669"/>
    <property type="project" value="InterPro"/>
</dbReference>
<dbReference type="GO" id="GO:0009117">
    <property type="term" value="P:nucleotide metabolic process"/>
    <property type="evidence" value="ECO:0007669"/>
    <property type="project" value="InterPro"/>
</dbReference>
<dbReference type="CDD" id="cd16009">
    <property type="entry name" value="PPM"/>
    <property type="match status" value="1"/>
</dbReference>
<dbReference type="FunFam" id="3.30.70.1250:FF:000001">
    <property type="entry name" value="Phosphopentomutase"/>
    <property type="match status" value="1"/>
</dbReference>
<dbReference type="Gene3D" id="3.40.720.10">
    <property type="entry name" value="Alkaline Phosphatase, subunit A"/>
    <property type="match status" value="1"/>
</dbReference>
<dbReference type="Gene3D" id="3.30.70.1250">
    <property type="entry name" value="Phosphopentomutase"/>
    <property type="match status" value="1"/>
</dbReference>
<dbReference type="HAMAP" id="MF_00740">
    <property type="entry name" value="Phosphopentomut"/>
    <property type="match status" value="1"/>
</dbReference>
<dbReference type="InterPro" id="IPR017850">
    <property type="entry name" value="Alkaline_phosphatase_core_sf"/>
</dbReference>
<dbReference type="InterPro" id="IPR010045">
    <property type="entry name" value="DeoB"/>
</dbReference>
<dbReference type="InterPro" id="IPR006124">
    <property type="entry name" value="Metalloenzyme"/>
</dbReference>
<dbReference type="InterPro" id="IPR024052">
    <property type="entry name" value="Phosphopentomutase_DeoB_cap_sf"/>
</dbReference>
<dbReference type="NCBIfam" id="TIGR01696">
    <property type="entry name" value="deoB"/>
    <property type="match status" value="1"/>
</dbReference>
<dbReference type="NCBIfam" id="NF003766">
    <property type="entry name" value="PRK05362.1"/>
    <property type="match status" value="1"/>
</dbReference>
<dbReference type="PANTHER" id="PTHR21110">
    <property type="entry name" value="PHOSPHOPENTOMUTASE"/>
    <property type="match status" value="1"/>
</dbReference>
<dbReference type="PANTHER" id="PTHR21110:SF0">
    <property type="entry name" value="PHOSPHOPENTOMUTASE"/>
    <property type="match status" value="1"/>
</dbReference>
<dbReference type="Pfam" id="PF01676">
    <property type="entry name" value="Metalloenzyme"/>
    <property type="match status" value="1"/>
</dbReference>
<dbReference type="PIRSF" id="PIRSF001491">
    <property type="entry name" value="Ppentomutase"/>
    <property type="match status" value="1"/>
</dbReference>
<dbReference type="SUPFAM" id="SSF53649">
    <property type="entry name" value="Alkaline phosphatase-like"/>
    <property type="match status" value="1"/>
</dbReference>
<dbReference type="SUPFAM" id="SSF143856">
    <property type="entry name" value="DeoB insert domain-like"/>
    <property type="match status" value="1"/>
</dbReference>
<sequence>MKRTFIMVLDSFGIGASADAKKFGDEGADTLGHIAEACARGEANVGRSGPLTLPNLSRLGLGKAAEESTGTFPVGLDKNADIIGAYGYASELSSGKDTPSGHWEIAGVPVLFDWGYFSDVENSFPQELLDKLVKRANLPGYLGNCHSSGTVILDQLGEEHMKTGKPIFYTSADSVFQIACHEETFGLDRLYELCEIAREELTDGGYNIGRVIARPFIGDKPGHFQRTGNRHDLAVEPPAPTMLKKLVDEKGGEVVSIGKIADIYAQVGITQKVKATGLDALFDATIEEMKKAGDNTIVFTNFVDFDSSYGHRRDVAGYAAALELFDRRLPELMALVKEDDILILTADHGCDPTWPGTDHTREHIPVLVYGPKVKPGSLGHRETFADIGQTVAAYFGLSPMDYGKNML</sequence>
<proteinExistence type="inferred from homology"/>
<organism>
    <name type="scientific">Yersinia pseudotuberculosis serotype IB (strain PB1/+)</name>
    <dbReference type="NCBI Taxonomy" id="502801"/>
    <lineage>
        <taxon>Bacteria</taxon>
        <taxon>Pseudomonadati</taxon>
        <taxon>Pseudomonadota</taxon>
        <taxon>Gammaproteobacteria</taxon>
        <taxon>Enterobacterales</taxon>
        <taxon>Yersiniaceae</taxon>
        <taxon>Yersinia</taxon>
    </lineage>
</organism>
<reference key="1">
    <citation type="submission" date="2008-04" db="EMBL/GenBank/DDBJ databases">
        <title>Complete sequence of Yersinia pseudotuberculosis PB1/+.</title>
        <authorList>
            <person name="Copeland A."/>
            <person name="Lucas S."/>
            <person name="Lapidus A."/>
            <person name="Glavina del Rio T."/>
            <person name="Dalin E."/>
            <person name="Tice H."/>
            <person name="Bruce D."/>
            <person name="Goodwin L."/>
            <person name="Pitluck S."/>
            <person name="Munk A.C."/>
            <person name="Brettin T."/>
            <person name="Detter J.C."/>
            <person name="Han C."/>
            <person name="Tapia R."/>
            <person name="Schmutz J."/>
            <person name="Larimer F."/>
            <person name="Land M."/>
            <person name="Hauser L."/>
            <person name="Challacombe J.F."/>
            <person name="Green L."/>
            <person name="Lindler L.E."/>
            <person name="Nikolich M.P."/>
            <person name="Richardson P."/>
        </authorList>
    </citation>
    <scope>NUCLEOTIDE SEQUENCE [LARGE SCALE GENOMIC DNA]</scope>
    <source>
        <strain>PB1/+</strain>
    </source>
</reference>
<accession>B2K3J0</accession>
<gene>
    <name evidence="1" type="primary">deoB</name>
    <name type="ordered locus">YPTS_0605</name>
</gene>